<accession>P68376</accession>
<accession>P05578</accession>
<feature type="chain" id="PRO_0000073063" description="Ovomucoid">
    <location>
        <begin position="1" status="less than"/>
        <end position="54" status="greater than"/>
    </location>
</feature>
<feature type="domain" description="Kazal-like" evidence="1">
    <location>
        <begin position="4"/>
        <end position="54"/>
    </location>
</feature>
<feature type="site" description="Reactive bond 3">
    <location>
        <begin position="16"/>
        <end position="17"/>
    </location>
</feature>
<feature type="glycosylation site" description="N-linked (GlcNAc...) asparagine">
    <location>
        <position position="43"/>
    </location>
</feature>
<feature type="disulfide bond">
    <location>
        <begin position="6"/>
        <end position="36"/>
    </location>
</feature>
<feature type="disulfide bond">
    <location>
        <begin position="14"/>
        <end position="33"/>
    </location>
</feature>
<feature type="disulfide bond">
    <location>
        <begin position="22"/>
        <end position="54"/>
    </location>
</feature>
<feature type="non-terminal residue">
    <location>
        <position position="1"/>
    </location>
</feature>
<feature type="non-terminal residue">
    <location>
        <position position="54"/>
    </location>
</feature>
<reference key="1">
    <citation type="journal article" date="1987" name="Biochemistry">
        <title>Ovomucoid third domains from 100 avian species: isolation, sequences, and hypervariability of enzyme-inhibitor contact residues.</title>
        <authorList>
            <person name="Laskowski M. Jr."/>
            <person name="Kato I."/>
            <person name="Ardelt W."/>
            <person name="Cook J."/>
            <person name="Denton A."/>
            <person name="Empie M.W."/>
            <person name="Kohr W.J."/>
            <person name="Park S.J."/>
            <person name="Parks K."/>
            <person name="Schatzley B.L."/>
            <person name="Schoenberger O.L."/>
            <person name="Tashiro M."/>
            <person name="Vichot G."/>
            <person name="Whatley H.E."/>
            <person name="Wieczorek A."/>
            <person name="Wieczorek M."/>
        </authorList>
    </citation>
    <scope>PROTEIN SEQUENCE</scope>
</reference>
<keyword id="KW-0903">Direct protein sequencing</keyword>
<keyword id="KW-1015">Disulfide bond</keyword>
<keyword id="KW-0325">Glycoprotein</keyword>
<keyword id="KW-0646">Protease inhibitor</keyword>
<keyword id="KW-0677">Repeat</keyword>
<keyword id="KW-0964">Secreted</keyword>
<keyword id="KW-0722">Serine protease inhibitor</keyword>
<organism>
    <name type="scientific">Aquila audax</name>
    <name type="common">Wedge-tailed eagle</name>
    <dbReference type="NCBI Taxonomy" id="8961"/>
    <lineage>
        <taxon>Eukaryota</taxon>
        <taxon>Metazoa</taxon>
        <taxon>Chordata</taxon>
        <taxon>Craniata</taxon>
        <taxon>Vertebrata</taxon>
        <taxon>Euteleostomi</taxon>
        <taxon>Archelosauria</taxon>
        <taxon>Archosauria</taxon>
        <taxon>Dinosauria</taxon>
        <taxon>Saurischia</taxon>
        <taxon>Theropoda</taxon>
        <taxon>Coelurosauria</taxon>
        <taxon>Aves</taxon>
        <taxon>Neognathae</taxon>
        <taxon>Neoaves</taxon>
        <taxon>Telluraves</taxon>
        <taxon>Accipitrimorphae</taxon>
        <taxon>Accipitriformes</taxon>
        <taxon>Accipitridae</taxon>
        <taxon>Accipitrinae</taxon>
        <taxon>Aquila</taxon>
    </lineage>
</organism>
<name>IOVO_AQUAU</name>
<comment type="subcellular location">
    <subcellularLocation>
        <location>Secreted</location>
    </subcellularLocation>
</comment>
<comment type="domain">
    <text>Avian ovomucoid consists of three homologous, tandem Kazal family inhibitory domains.</text>
</comment>
<sequence length="54" mass="5842">IAIVDCSDYPKPVCSLEYMPLCGSDSKTYSNKCDFCNAVVDSNGTLTLSHFGKC</sequence>
<proteinExistence type="evidence at protein level"/>
<dbReference type="PIR" id="E31447">
    <property type="entry name" value="E31447"/>
</dbReference>
<dbReference type="SMR" id="P68376"/>
<dbReference type="GO" id="GO:0005576">
    <property type="term" value="C:extracellular region"/>
    <property type="evidence" value="ECO:0007669"/>
    <property type="project" value="UniProtKB-SubCell"/>
</dbReference>
<dbReference type="GO" id="GO:0004867">
    <property type="term" value="F:serine-type endopeptidase inhibitor activity"/>
    <property type="evidence" value="ECO:0007669"/>
    <property type="project" value="UniProtKB-KW"/>
</dbReference>
<dbReference type="CDD" id="cd00104">
    <property type="entry name" value="KAZAL_FS"/>
    <property type="match status" value="1"/>
</dbReference>
<dbReference type="FunFam" id="3.30.60.30:FF:000037">
    <property type="entry name" value="Ovomucoid"/>
    <property type="match status" value="1"/>
</dbReference>
<dbReference type="Gene3D" id="3.30.60.30">
    <property type="match status" value="1"/>
</dbReference>
<dbReference type="InterPro" id="IPR051597">
    <property type="entry name" value="Bifunctional_prot_inhibitor"/>
</dbReference>
<dbReference type="InterPro" id="IPR002350">
    <property type="entry name" value="Kazal_dom"/>
</dbReference>
<dbReference type="InterPro" id="IPR036058">
    <property type="entry name" value="Kazal_dom_sf"/>
</dbReference>
<dbReference type="InterPro" id="IPR001239">
    <property type="entry name" value="Prot_inh_Kazal-m"/>
</dbReference>
<dbReference type="PANTHER" id="PTHR47729:SF1">
    <property type="entry name" value="OVOMUCOID-LIKE-RELATED"/>
    <property type="match status" value="1"/>
</dbReference>
<dbReference type="PANTHER" id="PTHR47729">
    <property type="entry name" value="SERINE PEPTIDASE INHIBITOR, KAZAL TYPE 2, TANDEM DUPLICATE 1-RELATED"/>
    <property type="match status" value="1"/>
</dbReference>
<dbReference type="Pfam" id="PF00050">
    <property type="entry name" value="Kazal_1"/>
    <property type="match status" value="1"/>
</dbReference>
<dbReference type="PRINTS" id="PR00290">
    <property type="entry name" value="KAZALINHBTR"/>
</dbReference>
<dbReference type="SMART" id="SM00280">
    <property type="entry name" value="KAZAL"/>
    <property type="match status" value="1"/>
</dbReference>
<dbReference type="SUPFAM" id="SSF100895">
    <property type="entry name" value="Kazal-type serine protease inhibitors"/>
    <property type="match status" value="1"/>
</dbReference>
<dbReference type="PROSITE" id="PS00282">
    <property type="entry name" value="KAZAL_1"/>
    <property type="match status" value="1"/>
</dbReference>
<dbReference type="PROSITE" id="PS51465">
    <property type="entry name" value="KAZAL_2"/>
    <property type="match status" value="1"/>
</dbReference>
<protein>
    <recommendedName>
        <fullName>Ovomucoid</fullName>
    </recommendedName>
</protein>
<evidence type="ECO:0000255" key="1">
    <source>
        <dbReference type="PROSITE-ProRule" id="PRU00798"/>
    </source>
</evidence>